<name>RL29_ECO81</name>
<reference key="1">
    <citation type="journal article" date="2009" name="PLoS Genet.">
        <title>Organised genome dynamics in the Escherichia coli species results in highly diverse adaptive paths.</title>
        <authorList>
            <person name="Touchon M."/>
            <person name="Hoede C."/>
            <person name="Tenaillon O."/>
            <person name="Barbe V."/>
            <person name="Baeriswyl S."/>
            <person name="Bidet P."/>
            <person name="Bingen E."/>
            <person name="Bonacorsi S."/>
            <person name="Bouchier C."/>
            <person name="Bouvet O."/>
            <person name="Calteau A."/>
            <person name="Chiapello H."/>
            <person name="Clermont O."/>
            <person name="Cruveiller S."/>
            <person name="Danchin A."/>
            <person name="Diard M."/>
            <person name="Dossat C."/>
            <person name="Karoui M.E."/>
            <person name="Frapy E."/>
            <person name="Garry L."/>
            <person name="Ghigo J.M."/>
            <person name="Gilles A.M."/>
            <person name="Johnson J."/>
            <person name="Le Bouguenec C."/>
            <person name="Lescat M."/>
            <person name="Mangenot S."/>
            <person name="Martinez-Jehanne V."/>
            <person name="Matic I."/>
            <person name="Nassif X."/>
            <person name="Oztas S."/>
            <person name="Petit M.A."/>
            <person name="Pichon C."/>
            <person name="Rouy Z."/>
            <person name="Ruf C.S."/>
            <person name="Schneider D."/>
            <person name="Tourret J."/>
            <person name="Vacherie B."/>
            <person name="Vallenet D."/>
            <person name="Medigue C."/>
            <person name="Rocha E.P.C."/>
            <person name="Denamur E."/>
        </authorList>
    </citation>
    <scope>NUCLEOTIDE SEQUENCE [LARGE SCALE GENOMIC DNA]</scope>
    <source>
        <strain>ED1a</strain>
    </source>
</reference>
<gene>
    <name evidence="1" type="primary">rpmC</name>
    <name type="ordered locus">ECED1_3975</name>
</gene>
<proteinExistence type="inferred from homology"/>
<accession>B7N196</accession>
<organism>
    <name type="scientific">Escherichia coli O81 (strain ED1a)</name>
    <dbReference type="NCBI Taxonomy" id="585397"/>
    <lineage>
        <taxon>Bacteria</taxon>
        <taxon>Pseudomonadati</taxon>
        <taxon>Pseudomonadota</taxon>
        <taxon>Gammaproteobacteria</taxon>
        <taxon>Enterobacterales</taxon>
        <taxon>Enterobacteriaceae</taxon>
        <taxon>Escherichia</taxon>
    </lineage>
</organism>
<dbReference type="EMBL" id="CU928162">
    <property type="protein sequence ID" value="CAR10114.2"/>
    <property type="molecule type" value="Genomic_DNA"/>
</dbReference>
<dbReference type="RefSeq" id="WP_000644741.1">
    <property type="nucleotide sequence ID" value="NC_011745.1"/>
</dbReference>
<dbReference type="SMR" id="B7N196"/>
<dbReference type="GeneID" id="93778675"/>
<dbReference type="KEGG" id="ecq:ECED1_3975"/>
<dbReference type="HOGENOM" id="CLU_158491_1_2_6"/>
<dbReference type="Proteomes" id="UP000000748">
    <property type="component" value="Chromosome"/>
</dbReference>
<dbReference type="GO" id="GO:0022625">
    <property type="term" value="C:cytosolic large ribosomal subunit"/>
    <property type="evidence" value="ECO:0007669"/>
    <property type="project" value="TreeGrafter"/>
</dbReference>
<dbReference type="GO" id="GO:0003735">
    <property type="term" value="F:structural constituent of ribosome"/>
    <property type="evidence" value="ECO:0007669"/>
    <property type="project" value="InterPro"/>
</dbReference>
<dbReference type="GO" id="GO:0006412">
    <property type="term" value="P:translation"/>
    <property type="evidence" value="ECO:0007669"/>
    <property type="project" value="UniProtKB-UniRule"/>
</dbReference>
<dbReference type="CDD" id="cd00427">
    <property type="entry name" value="Ribosomal_L29_HIP"/>
    <property type="match status" value="1"/>
</dbReference>
<dbReference type="Gene3D" id="6.10.140.1970">
    <property type="match status" value="1"/>
</dbReference>
<dbReference type="HAMAP" id="MF_00374">
    <property type="entry name" value="Ribosomal_uL29"/>
    <property type="match status" value="1"/>
</dbReference>
<dbReference type="InterPro" id="IPR050063">
    <property type="entry name" value="Ribosomal_protein_uL29"/>
</dbReference>
<dbReference type="InterPro" id="IPR001854">
    <property type="entry name" value="Ribosomal_uL29"/>
</dbReference>
<dbReference type="InterPro" id="IPR018254">
    <property type="entry name" value="Ribosomal_uL29_CS"/>
</dbReference>
<dbReference type="InterPro" id="IPR036049">
    <property type="entry name" value="Ribosomal_uL29_sf"/>
</dbReference>
<dbReference type="NCBIfam" id="TIGR00012">
    <property type="entry name" value="L29"/>
    <property type="match status" value="1"/>
</dbReference>
<dbReference type="PANTHER" id="PTHR10916">
    <property type="entry name" value="60S RIBOSOMAL PROTEIN L35/50S RIBOSOMAL PROTEIN L29"/>
    <property type="match status" value="1"/>
</dbReference>
<dbReference type="PANTHER" id="PTHR10916:SF0">
    <property type="entry name" value="LARGE RIBOSOMAL SUBUNIT PROTEIN UL29C"/>
    <property type="match status" value="1"/>
</dbReference>
<dbReference type="Pfam" id="PF00831">
    <property type="entry name" value="Ribosomal_L29"/>
    <property type="match status" value="1"/>
</dbReference>
<dbReference type="SUPFAM" id="SSF46561">
    <property type="entry name" value="Ribosomal protein L29 (L29p)"/>
    <property type="match status" value="1"/>
</dbReference>
<dbReference type="PROSITE" id="PS00579">
    <property type="entry name" value="RIBOSOMAL_L29"/>
    <property type="match status" value="1"/>
</dbReference>
<feature type="chain" id="PRO_1000194016" description="Large ribosomal subunit protein uL29">
    <location>
        <begin position="1"/>
        <end position="63"/>
    </location>
</feature>
<evidence type="ECO:0000255" key="1">
    <source>
        <dbReference type="HAMAP-Rule" id="MF_00374"/>
    </source>
</evidence>
<evidence type="ECO:0000305" key="2"/>
<comment type="similarity">
    <text evidence="1">Belongs to the universal ribosomal protein uL29 family.</text>
</comment>
<keyword id="KW-0687">Ribonucleoprotein</keyword>
<keyword id="KW-0689">Ribosomal protein</keyword>
<protein>
    <recommendedName>
        <fullName evidence="1">Large ribosomal subunit protein uL29</fullName>
    </recommendedName>
    <alternativeName>
        <fullName evidence="2">50S ribosomal protein L29</fullName>
    </alternativeName>
</protein>
<sequence length="63" mass="7273">MKAKELREKSVEELNTELLNLLREQFNLRMQAASGQLQQSHLLKQVRRDVARVKTLLNEKAGA</sequence>